<gene>
    <name type="primary">Sncg</name>
</gene>
<feature type="chain" id="PRO_0000184040" description="Gamma-synuclein">
    <location>
        <begin position="1"/>
        <end position="123"/>
    </location>
</feature>
<feature type="repeat" description="1">
    <location>
        <begin position="20"/>
        <end position="30"/>
    </location>
</feature>
<feature type="repeat" description="2">
    <location>
        <begin position="31"/>
        <end position="41"/>
    </location>
</feature>
<feature type="repeat" description="3; approximate">
    <location>
        <begin position="42"/>
        <end position="56"/>
    </location>
</feature>
<feature type="repeat" description="4">
    <location>
        <begin position="57"/>
        <end position="67"/>
    </location>
</feature>
<feature type="region of interest" description="4 X 11 AA tandem repeats of [EGSA]-K-T-K-[EQ]-[GQ]-V-X(4)">
    <location>
        <begin position="20"/>
        <end position="67"/>
    </location>
</feature>
<feature type="region of interest" description="Disordered" evidence="3">
    <location>
        <begin position="93"/>
        <end position="123"/>
    </location>
</feature>
<feature type="compositionally biased region" description="Basic and acidic residues" evidence="3">
    <location>
        <begin position="107"/>
        <end position="123"/>
    </location>
</feature>
<feature type="modified residue" description="Phosphoserine" evidence="6">
    <location>
        <position position="67"/>
    </location>
</feature>
<feature type="modified residue" description="Phosphoserine" evidence="6">
    <location>
        <position position="72"/>
    </location>
</feature>
<feature type="modified residue" description="Phosphoserine; by BARK1, CaMK2 and CK2" evidence="2">
    <location>
        <position position="120"/>
    </location>
</feature>
<feature type="sequence conflict" description="In Ref. 1; CAA60485." evidence="5" ref="1">
    <original>K</original>
    <variation>T</variation>
    <location>
        <position position="23"/>
    </location>
</feature>
<feature type="sequence conflict" description="In Ref. 1; CAA60485." evidence="5" ref="1">
    <original>T</original>
    <variation>A</variation>
    <location>
        <position position="42"/>
    </location>
</feature>
<feature type="sequence conflict" description="In Ref. 1; CAA60485." evidence="5" ref="1">
    <original>K</original>
    <variation>E</variation>
    <location>
        <position position="80"/>
    </location>
</feature>
<comment type="function">
    <text evidence="1">Plays a role in neurofilament network integrity. May be involved in modulating axonal architecture during development and in the adult. In vitro, increases the susceptibility of neurofilament-H to calcium-dependent proteases. May also function in modulating the keratin network in skin. Activates the MAPK and Elk-1 signal transduction pathway (By similarity).</text>
</comment>
<comment type="subunit">
    <text evidence="1">May be a centrosome-associated protein. Interacts with MYOC; affects its secretion and its aggregation (By similarity).</text>
</comment>
<comment type="subcellular location">
    <subcellularLocation>
        <location evidence="1">Cytoplasm</location>
        <location evidence="1">Perinuclear region</location>
    </subcellularLocation>
    <subcellularLocation>
        <location evidence="1">Cytoplasm</location>
        <location evidence="1">Cytoskeleton</location>
        <location evidence="1">Microtubule organizing center</location>
        <location evidence="1">Centrosome</location>
    </subcellularLocation>
    <subcellularLocation>
        <location evidence="1">Cytoplasm</location>
        <location evidence="1">Cytoskeleton</location>
        <location evidence="1">Spindle</location>
    </subcellularLocation>
    <text evidence="1">Associated with centrosomes in several interphase cells. In mitotic cells, localized to the poles of the spindle (By similarity).</text>
</comment>
<comment type="tissue specificity">
    <text evidence="4">Specifically expressed in the peripheral nervous system. High expression in motoneurons of the brainstem. Also found in neurons of many other brain regions including the cerebellar cortex, thalamus, hypothalamus and CA1, CA2, CA3 and CA4 regions of the hippocampus.</text>
</comment>
<comment type="PTM">
    <text evidence="1">Phosphorylated. Phosphorylation by GRK5 appears to occur on residues distinct from the residue phosphorylated by other kinases (By similarity).</text>
</comment>
<comment type="similarity">
    <text evidence="5">Belongs to the synuclein family.</text>
</comment>
<evidence type="ECO:0000250" key="1"/>
<evidence type="ECO:0000250" key="2">
    <source>
        <dbReference type="UniProtKB" id="O76070"/>
    </source>
</evidence>
<evidence type="ECO:0000256" key="3">
    <source>
        <dbReference type="SAM" id="MobiDB-lite"/>
    </source>
</evidence>
<evidence type="ECO:0000269" key="4">
    <source>
    </source>
</evidence>
<evidence type="ECO:0000305" key="5"/>
<evidence type="ECO:0007744" key="6">
    <source>
    </source>
</evidence>
<sequence>MDVFKKGFSIAREGVVGAVEKTKQGVTEAAEKTKEGVMYVGTKTKGERGTSVTSVAEKTKEQANAVSEAVVSSVNTVATKTVEEAENIVVTTGVVRKEDLEPPAQDQEAKEQEEGEEAKSGGD</sequence>
<name>SYUG_RAT</name>
<dbReference type="EMBL" id="X86789">
    <property type="protein sequence ID" value="CAA60485.1"/>
    <property type="molecule type" value="mRNA"/>
</dbReference>
<dbReference type="EMBL" id="AY518351">
    <property type="protein sequence ID" value="AAR99333.1"/>
    <property type="molecule type" value="mRNA"/>
</dbReference>
<dbReference type="PIR" id="A57431">
    <property type="entry name" value="A57431"/>
</dbReference>
<dbReference type="RefSeq" id="NP_113876.1">
    <property type="nucleotide sequence ID" value="NM_031688.1"/>
</dbReference>
<dbReference type="FunCoup" id="Q63544">
    <property type="interactions" value="42"/>
</dbReference>
<dbReference type="STRING" id="10116.ENSRNOP00000071576"/>
<dbReference type="GlyGen" id="Q63544">
    <property type="glycosylation" value="1 site, 1 O-linked glycan (1 site)"/>
</dbReference>
<dbReference type="iPTMnet" id="Q63544"/>
<dbReference type="PhosphoSitePlus" id="Q63544"/>
<dbReference type="GeneID" id="64347"/>
<dbReference type="KEGG" id="rno:64347"/>
<dbReference type="UCSC" id="RGD:70996">
    <property type="organism name" value="rat"/>
</dbReference>
<dbReference type="AGR" id="RGD:70996"/>
<dbReference type="CTD" id="6623"/>
<dbReference type="RGD" id="70996">
    <property type="gene designation" value="Sncg"/>
</dbReference>
<dbReference type="eggNOG" id="ENOG502S3WF">
    <property type="taxonomic scope" value="Eukaryota"/>
</dbReference>
<dbReference type="InParanoid" id="Q63544"/>
<dbReference type="PhylomeDB" id="Q63544"/>
<dbReference type="PRO" id="PR:Q63544"/>
<dbReference type="Proteomes" id="UP000002494">
    <property type="component" value="Unplaced"/>
</dbReference>
<dbReference type="GO" id="GO:0030424">
    <property type="term" value="C:axon"/>
    <property type="evidence" value="ECO:0000266"/>
    <property type="project" value="RGD"/>
</dbReference>
<dbReference type="GO" id="GO:0043679">
    <property type="term" value="C:axon terminus"/>
    <property type="evidence" value="ECO:0000314"/>
    <property type="project" value="RGD"/>
</dbReference>
<dbReference type="GO" id="GO:0005813">
    <property type="term" value="C:centrosome"/>
    <property type="evidence" value="ECO:0007669"/>
    <property type="project" value="UniProtKB-SubCell"/>
</dbReference>
<dbReference type="GO" id="GO:0005737">
    <property type="term" value="C:cytoplasm"/>
    <property type="evidence" value="ECO:0000266"/>
    <property type="project" value="RGD"/>
</dbReference>
<dbReference type="GO" id="GO:0043025">
    <property type="term" value="C:neuronal cell body"/>
    <property type="evidence" value="ECO:0000314"/>
    <property type="project" value="RGD"/>
</dbReference>
<dbReference type="GO" id="GO:0048471">
    <property type="term" value="C:perinuclear region of cytoplasm"/>
    <property type="evidence" value="ECO:0000314"/>
    <property type="project" value="RGD"/>
</dbReference>
<dbReference type="GO" id="GO:0005819">
    <property type="term" value="C:spindle"/>
    <property type="evidence" value="ECO:0007669"/>
    <property type="project" value="UniProtKB-SubCell"/>
</dbReference>
<dbReference type="GO" id="GO:0043014">
    <property type="term" value="F:alpha-tubulin binding"/>
    <property type="evidence" value="ECO:0000314"/>
    <property type="project" value="RGD"/>
</dbReference>
<dbReference type="GO" id="GO:0048487">
    <property type="term" value="F:beta-tubulin binding"/>
    <property type="evidence" value="ECO:0000314"/>
    <property type="project" value="RGD"/>
</dbReference>
<dbReference type="GO" id="GO:1903136">
    <property type="term" value="F:cuprous ion binding"/>
    <property type="evidence" value="ECO:0000318"/>
    <property type="project" value="GO_Central"/>
</dbReference>
<dbReference type="GO" id="GO:0008344">
    <property type="term" value="P:adult locomotory behavior"/>
    <property type="evidence" value="ECO:0000266"/>
    <property type="project" value="RGD"/>
</dbReference>
<dbReference type="GO" id="GO:0002118">
    <property type="term" value="P:aggressive behavior"/>
    <property type="evidence" value="ECO:0000270"/>
    <property type="project" value="RGD"/>
</dbReference>
<dbReference type="GO" id="GO:0071464">
    <property type="term" value="P:cellular response to hydrostatic pressure"/>
    <property type="evidence" value="ECO:0000270"/>
    <property type="project" value="RGD"/>
</dbReference>
<dbReference type="GO" id="GO:0007268">
    <property type="term" value="P:chemical synaptic transmission"/>
    <property type="evidence" value="ECO:0000266"/>
    <property type="project" value="RGD"/>
</dbReference>
<dbReference type="GO" id="GO:0007422">
    <property type="term" value="P:peripheral nervous system development"/>
    <property type="evidence" value="ECO:0000303"/>
    <property type="project" value="RGD"/>
</dbReference>
<dbReference type="GO" id="GO:0009306">
    <property type="term" value="P:protein secretion"/>
    <property type="evidence" value="ECO:0000266"/>
    <property type="project" value="RGD"/>
</dbReference>
<dbReference type="GO" id="GO:0080135">
    <property type="term" value="P:regulation of cellular response to stress"/>
    <property type="evidence" value="ECO:0000315"/>
    <property type="project" value="RGD"/>
</dbReference>
<dbReference type="GO" id="GO:0014059">
    <property type="term" value="P:regulation of dopamine secretion"/>
    <property type="evidence" value="ECO:0000266"/>
    <property type="project" value="RGD"/>
</dbReference>
<dbReference type="GO" id="GO:0046928">
    <property type="term" value="P:regulation of neurotransmitter secretion"/>
    <property type="evidence" value="ECO:0000266"/>
    <property type="project" value="RGD"/>
</dbReference>
<dbReference type="GO" id="GO:0042220">
    <property type="term" value="P:response to cocaine"/>
    <property type="evidence" value="ECO:0000270"/>
    <property type="project" value="RGD"/>
</dbReference>
<dbReference type="GO" id="GO:1904307">
    <property type="term" value="P:response to desipramine"/>
    <property type="evidence" value="ECO:0000270"/>
    <property type="project" value="RGD"/>
</dbReference>
<dbReference type="GO" id="GO:0009410">
    <property type="term" value="P:response to xenobiotic stimulus"/>
    <property type="evidence" value="ECO:0000270"/>
    <property type="project" value="RGD"/>
</dbReference>
<dbReference type="GO" id="GO:0050808">
    <property type="term" value="P:synapse organization"/>
    <property type="evidence" value="ECO:0000266"/>
    <property type="project" value="RGD"/>
</dbReference>
<dbReference type="GO" id="GO:0048488">
    <property type="term" value="P:synaptic vesicle endocytosis"/>
    <property type="evidence" value="ECO:0000318"/>
    <property type="project" value="GO_Central"/>
</dbReference>
<dbReference type="FunFam" id="1.10.287.700:FF:000002">
    <property type="entry name" value="Gamma-synuclein"/>
    <property type="match status" value="1"/>
</dbReference>
<dbReference type="Gene3D" id="1.10.287.700">
    <property type="entry name" value="Helix hairpin bin"/>
    <property type="match status" value="1"/>
</dbReference>
<dbReference type="InterPro" id="IPR001058">
    <property type="entry name" value="Synuclein"/>
</dbReference>
<dbReference type="InterPro" id="IPR002462">
    <property type="entry name" value="Synuclein_gamma"/>
</dbReference>
<dbReference type="PANTHER" id="PTHR13820:SF10">
    <property type="entry name" value="GAMMA-SYNUCLEIN"/>
    <property type="match status" value="1"/>
</dbReference>
<dbReference type="PANTHER" id="PTHR13820">
    <property type="entry name" value="SYNUCLEIN"/>
    <property type="match status" value="1"/>
</dbReference>
<dbReference type="Pfam" id="PF01387">
    <property type="entry name" value="Synuclein"/>
    <property type="match status" value="1"/>
</dbReference>
<dbReference type="PRINTS" id="PR01214">
    <property type="entry name" value="GSYNUCLEIN"/>
</dbReference>
<dbReference type="PRINTS" id="PR01211">
    <property type="entry name" value="SYNUCLEIN"/>
</dbReference>
<dbReference type="SUPFAM" id="SSF118375">
    <property type="entry name" value="Synuclein"/>
    <property type="match status" value="1"/>
</dbReference>
<reference key="1">
    <citation type="journal article" date="1995" name="J. Biol. Chem.">
        <title>Peripheral nervous system-specific genes identified by subtractive cDNA cloning.</title>
        <authorList>
            <person name="Akopian A.N."/>
            <person name="Wood N."/>
        </authorList>
    </citation>
    <scope>NUCLEOTIDE SEQUENCE [MRNA]</scope>
    <source>
        <strain>Sprague-Dawley</strain>
        <tissue>Spinal ganglion</tissue>
    </source>
</reference>
<reference key="2">
    <citation type="submission" date="2004-01" db="EMBL/GenBank/DDBJ databases">
        <title>Gamma synuclein is expressed in the hippocampus of adult rats.</title>
        <authorList>
            <person name="Klugmann M."/>
            <person name="Leichtlein C.B."/>
            <person name="During M.J."/>
        </authorList>
    </citation>
    <scope>NUCLEOTIDE SEQUENCE [MRNA]</scope>
    <source>
        <strain>Wistar</strain>
        <tissue>Brain</tissue>
    </source>
</reference>
<reference key="3">
    <citation type="submission" date="2006-11" db="UniProtKB">
        <authorList>
            <person name="Lubec G."/>
            <person name="Afjehi-Sadat L."/>
        </authorList>
    </citation>
    <scope>PROTEIN SEQUENCE OF 81-96</scope>
    <scope>IDENTIFICATION BY MASS SPECTROMETRY</scope>
    <source>
        <strain>Sprague-Dawley</strain>
        <tissue>Spinal cord</tissue>
    </source>
</reference>
<reference key="4">
    <citation type="journal article" date="1998" name="J. Neurosci.">
        <title>Persyn, a member of the synuclein family, has a distinct pattern of expression in the developing nervous system.</title>
        <authorList>
            <person name="Buchman V.L."/>
            <person name="Hunter H.J."/>
            <person name="Pinon L.G."/>
            <person name="Thompson J."/>
            <person name="Privalova E.M."/>
            <person name="Ninkina N.N."/>
            <person name="Davies A.M."/>
        </authorList>
    </citation>
    <scope>TISSUE SPECIFICITY</scope>
</reference>
<reference key="5">
    <citation type="journal article" date="2012" name="Nat. Commun.">
        <title>Quantitative maps of protein phosphorylation sites across 14 different rat organs and tissues.</title>
        <authorList>
            <person name="Lundby A."/>
            <person name="Secher A."/>
            <person name="Lage K."/>
            <person name="Nordsborg N.B."/>
            <person name="Dmytriyev A."/>
            <person name="Lundby C."/>
            <person name="Olsen J.V."/>
        </authorList>
    </citation>
    <scope>PHOSPHORYLATION [LARGE SCALE ANALYSIS] AT SER-67 AND SER-72</scope>
    <scope>IDENTIFICATION BY MASS SPECTROMETRY [LARGE SCALE ANALYSIS]</scope>
</reference>
<organism>
    <name type="scientific">Rattus norvegicus</name>
    <name type="common">Rat</name>
    <dbReference type="NCBI Taxonomy" id="10116"/>
    <lineage>
        <taxon>Eukaryota</taxon>
        <taxon>Metazoa</taxon>
        <taxon>Chordata</taxon>
        <taxon>Craniata</taxon>
        <taxon>Vertebrata</taxon>
        <taxon>Euteleostomi</taxon>
        <taxon>Mammalia</taxon>
        <taxon>Eutheria</taxon>
        <taxon>Euarchontoglires</taxon>
        <taxon>Glires</taxon>
        <taxon>Rodentia</taxon>
        <taxon>Myomorpha</taxon>
        <taxon>Muroidea</taxon>
        <taxon>Muridae</taxon>
        <taxon>Murinae</taxon>
        <taxon>Rattus</taxon>
    </lineage>
</organism>
<proteinExistence type="evidence at protein level"/>
<protein>
    <recommendedName>
        <fullName>Gamma-synuclein</fullName>
    </recommendedName>
    <alternativeName>
        <fullName>Persyn</fullName>
    </alternativeName>
    <alternativeName>
        <fullName>Sensory neuron synuclein</fullName>
    </alternativeName>
</protein>
<keyword id="KW-0963">Cytoplasm</keyword>
<keyword id="KW-0206">Cytoskeleton</keyword>
<keyword id="KW-0903">Direct protein sequencing</keyword>
<keyword id="KW-0597">Phosphoprotein</keyword>
<keyword id="KW-1185">Reference proteome</keyword>
<keyword id="KW-0677">Repeat</keyword>
<accession>Q63544</accession>
<accession>Q6R2I0</accession>